<feature type="chain" id="PRO_0000317252" description="Coiled-coil domain-containing protein 146">
    <location>
        <begin position="1"/>
        <end position="955"/>
    </location>
</feature>
<feature type="region of interest" description="Disordered" evidence="3">
    <location>
        <begin position="1"/>
        <end position="22"/>
    </location>
</feature>
<feature type="coiled-coil region" evidence="2">
    <location>
        <begin position="114"/>
        <end position="141"/>
    </location>
</feature>
<feature type="coiled-coil region" evidence="2">
    <location>
        <begin position="169"/>
        <end position="321"/>
    </location>
</feature>
<feature type="coiled-coil region" evidence="2">
    <location>
        <begin position="400"/>
        <end position="461"/>
    </location>
</feature>
<feature type="coiled-coil region" evidence="2">
    <location>
        <begin position="534"/>
        <end position="640"/>
    </location>
</feature>
<feature type="coiled-coil region" evidence="2">
    <location>
        <begin position="667"/>
        <end position="832"/>
    </location>
</feature>
<feature type="compositionally biased region" description="Acidic residues" evidence="3">
    <location>
        <begin position="1"/>
        <end position="17"/>
    </location>
</feature>
<feature type="splice variant" id="VSP_030926" description="In isoform 2." evidence="9">
    <location>
        <begin position="1"/>
        <end position="254"/>
    </location>
</feature>
<feature type="splice variant" id="VSP_030927" description="In isoform 2." evidence="9">
    <location>
        <begin position="392"/>
        <end position="423"/>
    </location>
</feature>
<feature type="sequence variant" id="VAR_061583" description="In dbSNP:rs17853516." evidence="5">
    <original>E</original>
    <variation>Q</variation>
    <location>
        <position position="263"/>
    </location>
</feature>
<feature type="sequence variant" id="VAR_050742" description="In dbSNP:rs1109968." evidence="4">
    <original>N</original>
    <variation>S</variation>
    <location>
        <position position="345"/>
    </location>
</feature>
<feature type="sequence variant" id="VAR_089737" description="In SPGF94; likely pathogenic." evidence="8">
    <location>
        <begin position="362"/>
        <end position="955"/>
    </location>
</feature>
<feature type="sequence variant" id="VAR_061584" description="In dbSNP:rs58545343.">
    <original>I</original>
    <variation>T</variation>
    <location>
        <position position="466"/>
    </location>
</feature>
<feature type="sequence conflict" description="In Ref. 2; BAF85180." evidence="10" ref="2">
    <original>Y</original>
    <variation>H</variation>
    <location>
        <position position="655"/>
    </location>
</feature>
<feature type="sequence conflict" description="In Ref. 2; BAF85180." evidence="10" ref="2">
    <original>M</original>
    <variation>I</variation>
    <location>
        <position position="829"/>
    </location>
</feature>
<reference key="1">
    <citation type="journal article" date="2000" name="DNA Res.">
        <title>Prediction of the coding sequences of unidentified human genes. XVII. The complete sequences of 100 new cDNA clones from brain which code for large proteins in vitro.</title>
        <authorList>
            <person name="Nagase T."/>
            <person name="Kikuno R."/>
            <person name="Ishikawa K."/>
            <person name="Hirosawa M."/>
            <person name="Ohara O."/>
        </authorList>
    </citation>
    <scope>NUCLEOTIDE SEQUENCE [LARGE SCALE MRNA] (ISOFORM 2)</scope>
    <scope>VARIANT SER-345</scope>
</reference>
<reference key="2">
    <citation type="journal article" date="2004" name="Nat. Genet.">
        <title>Complete sequencing and characterization of 21,243 full-length human cDNAs.</title>
        <authorList>
            <person name="Ota T."/>
            <person name="Suzuki Y."/>
            <person name="Nishikawa T."/>
            <person name="Otsuki T."/>
            <person name="Sugiyama T."/>
            <person name="Irie R."/>
            <person name="Wakamatsu A."/>
            <person name="Hayashi K."/>
            <person name="Sato H."/>
            <person name="Nagai K."/>
            <person name="Kimura K."/>
            <person name="Makita H."/>
            <person name="Sekine M."/>
            <person name="Obayashi M."/>
            <person name="Nishi T."/>
            <person name="Shibahara T."/>
            <person name="Tanaka T."/>
            <person name="Ishii S."/>
            <person name="Yamamoto J."/>
            <person name="Saito K."/>
            <person name="Kawai Y."/>
            <person name="Isono Y."/>
            <person name="Nakamura Y."/>
            <person name="Nagahari K."/>
            <person name="Murakami K."/>
            <person name="Yasuda T."/>
            <person name="Iwayanagi T."/>
            <person name="Wagatsuma M."/>
            <person name="Shiratori A."/>
            <person name="Sudo H."/>
            <person name="Hosoiri T."/>
            <person name="Kaku Y."/>
            <person name="Kodaira H."/>
            <person name="Kondo H."/>
            <person name="Sugawara M."/>
            <person name="Takahashi M."/>
            <person name="Kanda K."/>
            <person name="Yokoi T."/>
            <person name="Furuya T."/>
            <person name="Kikkawa E."/>
            <person name="Omura Y."/>
            <person name="Abe K."/>
            <person name="Kamihara K."/>
            <person name="Katsuta N."/>
            <person name="Sato K."/>
            <person name="Tanikawa M."/>
            <person name="Yamazaki M."/>
            <person name="Ninomiya K."/>
            <person name="Ishibashi T."/>
            <person name="Yamashita H."/>
            <person name="Murakawa K."/>
            <person name="Fujimori K."/>
            <person name="Tanai H."/>
            <person name="Kimata M."/>
            <person name="Watanabe M."/>
            <person name="Hiraoka S."/>
            <person name="Chiba Y."/>
            <person name="Ishida S."/>
            <person name="Ono Y."/>
            <person name="Takiguchi S."/>
            <person name="Watanabe S."/>
            <person name="Yosida M."/>
            <person name="Hotuta T."/>
            <person name="Kusano J."/>
            <person name="Kanehori K."/>
            <person name="Takahashi-Fujii A."/>
            <person name="Hara H."/>
            <person name="Tanase T.-O."/>
            <person name="Nomura Y."/>
            <person name="Togiya S."/>
            <person name="Komai F."/>
            <person name="Hara R."/>
            <person name="Takeuchi K."/>
            <person name="Arita M."/>
            <person name="Imose N."/>
            <person name="Musashino K."/>
            <person name="Yuuki H."/>
            <person name="Oshima A."/>
            <person name="Sasaki N."/>
            <person name="Aotsuka S."/>
            <person name="Yoshikawa Y."/>
            <person name="Matsunawa H."/>
            <person name="Ichihara T."/>
            <person name="Shiohata N."/>
            <person name="Sano S."/>
            <person name="Moriya S."/>
            <person name="Momiyama H."/>
            <person name="Satoh N."/>
            <person name="Takami S."/>
            <person name="Terashima Y."/>
            <person name="Suzuki O."/>
            <person name="Nakagawa S."/>
            <person name="Senoh A."/>
            <person name="Mizoguchi H."/>
            <person name="Goto Y."/>
            <person name="Shimizu F."/>
            <person name="Wakebe H."/>
            <person name="Hishigaki H."/>
            <person name="Watanabe T."/>
            <person name="Sugiyama A."/>
            <person name="Takemoto M."/>
            <person name="Kawakami B."/>
            <person name="Yamazaki M."/>
            <person name="Watanabe K."/>
            <person name="Kumagai A."/>
            <person name="Itakura S."/>
            <person name="Fukuzumi Y."/>
            <person name="Fujimori Y."/>
            <person name="Komiyama M."/>
            <person name="Tashiro H."/>
            <person name="Tanigami A."/>
            <person name="Fujiwara T."/>
            <person name="Ono T."/>
            <person name="Yamada K."/>
            <person name="Fujii Y."/>
            <person name="Ozaki K."/>
            <person name="Hirao M."/>
            <person name="Ohmori Y."/>
            <person name="Kawabata A."/>
            <person name="Hikiji T."/>
            <person name="Kobatake N."/>
            <person name="Inagaki H."/>
            <person name="Ikema Y."/>
            <person name="Okamoto S."/>
            <person name="Okitani R."/>
            <person name="Kawakami T."/>
            <person name="Noguchi S."/>
            <person name="Itoh T."/>
            <person name="Shigeta K."/>
            <person name="Senba T."/>
            <person name="Matsumura K."/>
            <person name="Nakajima Y."/>
            <person name="Mizuno T."/>
            <person name="Morinaga M."/>
            <person name="Sasaki M."/>
            <person name="Togashi T."/>
            <person name="Oyama M."/>
            <person name="Hata H."/>
            <person name="Watanabe M."/>
            <person name="Komatsu T."/>
            <person name="Mizushima-Sugano J."/>
            <person name="Satoh T."/>
            <person name="Shirai Y."/>
            <person name="Takahashi Y."/>
            <person name="Nakagawa K."/>
            <person name="Okumura K."/>
            <person name="Nagase T."/>
            <person name="Nomura N."/>
            <person name="Kikuchi H."/>
            <person name="Masuho Y."/>
            <person name="Yamashita R."/>
            <person name="Nakai K."/>
            <person name="Yada T."/>
            <person name="Nakamura Y."/>
            <person name="Ohara O."/>
            <person name="Isogai T."/>
            <person name="Sugano S."/>
        </authorList>
    </citation>
    <scope>NUCLEOTIDE SEQUENCE [LARGE SCALE MRNA] (ISOFORM 1)</scope>
    <source>
        <tissue>Testis</tissue>
    </source>
</reference>
<reference key="3">
    <citation type="journal article" date="2004" name="Genome Res.">
        <title>The status, quality, and expansion of the NIH full-length cDNA project: the Mammalian Gene Collection (MGC).</title>
        <authorList>
            <consortium name="The MGC Project Team"/>
        </authorList>
    </citation>
    <scope>NUCLEOTIDE SEQUENCE [LARGE SCALE MRNA] (ISOFORM 1)</scope>
    <scope>VARIANT GLN-263</scope>
    <source>
        <tissue>Testis</tissue>
    </source>
</reference>
<reference key="4">
    <citation type="journal article" date="2009" name="Mol. Cell. Proteomics">
        <title>A strategy for precise and large scale identification of core fucosylated glycoproteins.</title>
        <authorList>
            <person name="Jia W."/>
            <person name="Lu Z."/>
            <person name="Fu Y."/>
            <person name="Wang H.P."/>
            <person name="Wang L.H."/>
            <person name="Chi H."/>
            <person name="Yuan Z.F."/>
            <person name="Zheng Z.B."/>
            <person name="Song L.N."/>
            <person name="Han H.H."/>
            <person name="Liang Y.M."/>
            <person name="Wang J.L."/>
            <person name="Cai Y."/>
            <person name="Zhang Y.K."/>
            <person name="Deng Y.L."/>
            <person name="Ying W.T."/>
            <person name="He S.M."/>
            <person name="Qian X.H."/>
        </authorList>
    </citation>
    <scope>IDENTIFICATION</scope>
</reference>
<reference key="5">
    <citation type="journal article" date="2014" name="J. Cell Sci.">
        <title>Proteomic analysis of mammalian sperm cells identifies new components of the centrosome.</title>
        <authorList>
            <person name="Firat-Karalar E.N."/>
            <person name="Sante J."/>
            <person name="Elliott S."/>
            <person name="Stearns T."/>
        </authorList>
    </citation>
    <scope>SUBCELLULAR LOCATION</scope>
</reference>
<reference key="6">
    <citation type="journal article" date="2018" name="Front. Cell. Infect. Microbiol.">
        <title>The Human Centrosomal Protein CCDC146 Binds Chlamydia trachomatis Inclusion Membrane Protein CT288 and Is Recruited to the Periphery of the Chlamydia-Containing Vacuole.</title>
        <authorList>
            <person name="Almeida F."/>
            <person name="Luis M.P."/>
            <person name="Pereira I.S."/>
            <person name="Pais S.V."/>
            <person name="Mota L.J."/>
        </authorList>
    </citation>
    <scope>INTERACTION WITH C.TRACHOMATIS INCM</scope>
    <scope>SUBCELLULAR LOCATION</scope>
</reference>
<reference key="7">
    <citation type="journal article" date="2024" name="Elife">
        <title>Lack of CCDC146, a ubiquitous centriole and microtubule-associated protein, leads to non-syndromic male infertility in human and mouse.</title>
        <authorList>
            <person name="Muronova J."/>
            <person name="Kherraf Z.E."/>
            <person name="Giordani E."/>
            <person name="Lambert E."/>
            <person name="Eckert S."/>
            <person name="Cazin C."/>
            <person name="Amiri-Yekta A."/>
            <person name="Court M."/>
            <person name="Chevalier G."/>
            <person name="Martinez G."/>
            <person name="Neirijnck Y."/>
            <person name="Kuehne F."/>
            <person name="Wehrli L."/>
            <person name="Klena N."/>
            <person name="Hamel V."/>
            <person name="De Macedo L."/>
            <person name="Escoffier J."/>
            <person name="Guichard P."/>
            <person name="Coutton C."/>
            <person name="Mustapha S.F.B."/>
            <person name="Kharouf M."/>
            <person name="Bouin A.P."/>
            <person name="Zouari R."/>
            <person name="Thierry-Mieg N."/>
            <person name="Nef S."/>
            <person name="Geimer S."/>
            <person name="Loeuillet C."/>
            <person name="Ray P.F."/>
            <person name="Arnoult C."/>
        </authorList>
    </citation>
    <scope>INVOLVEMENT IN SPGF94</scope>
    <scope>VARIANT SPGF94 362-ARG--ILE-955 DEL</scope>
    <scope>SUBCELLULAR LOCATION</scope>
    <scope>TISSUE SPECIFICITY</scope>
</reference>
<accession>Q8IYE0</accession>
<accession>A8K8X6</accession>
<accession>Q9P223</accession>
<organism>
    <name type="scientific">Homo sapiens</name>
    <name type="common">Human</name>
    <dbReference type="NCBI Taxonomy" id="9606"/>
    <lineage>
        <taxon>Eukaryota</taxon>
        <taxon>Metazoa</taxon>
        <taxon>Chordata</taxon>
        <taxon>Craniata</taxon>
        <taxon>Vertebrata</taxon>
        <taxon>Euteleostomi</taxon>
        <taxon>Mammalia</taxon>
        <taxon>Eutheria</taxon>
        <taxon>Euarchontoglires</taxon>
        <taxon>Primates</taxon>
        <taxon>Haplorrhini</taxon>
        <taxon>Catarrhini</taxon>
        <taxon>Hominidae</taxon>
        <taxon>Homo</taxon>
    </lineage>
</organism>
<dbReference type="EMBL" id="AB040938">
    <property type="protein sequence ID" value="BAA96029.1"/>
    <property type="status" value="ALT_INIT"/>
    <property type="molecule type" value="mRNA"/>
</dbReference>
<dbReference type="EMBL" id="AK292491">
    <property type="protein sequence ID" value="BAF85180.1"/>
    <property type="molecule type" value="mRNA"/>
</dbReference>
<dbReference type="EMBL" id="BC036053">
    <property type="protein sequence ID" value="AAH36053.1"/>
    <property type="molecule type" value="mRNA"/>
</dbReference>
<dbReference type="CCDS" id="CCDS34671.1">
    <molecule id="Q8IYE0-1"/>
</dbReference>
<dbReference type="RefSeq" id="NP_065930.2">
    <molecule id="Q8IYE0-1"/>
    <property type="nucleotide sequence ID" value="NM_020879.3"/>
</dbReference>
<dbReference type="RefSeq" id="XP_047276618.1">
    <molecule id="Q8IYE0-1"/>
    <property type="nucleotide sequence ID" value="XM_047420662.1"/>
</dbReference>
<dbReference type="RefSeq" id="XP_054214695.1">
    <molecule id="Q8IYE0-1"/>
    <property type="nucleotide sequence ID" value="XM_054358720.1"/>
</dbReference>
<dbReference type="SMR" id="Q8IYE0"/>
<dbReference type="BioGRID" id="121678">
    <property type="interactions" value="81"/>
</dbReference>
<dbReference type="FunCoup" id="Q8IYE0">
    <property type="interactions" value="86"/>
</dbReference>
<dbReference type="IntAct" id="Q8IYE0">
    <property type="interactions" value="77"/>
</dbReference>
<dbReference type="MINT" id="Q8IYE0"/>
<dbReference type="STRING" id="9606.ENSP00000285871"/>
<dbReference type="CarbonylDB" id="Q8IYE0"/>
<dbReference type="iPTMnet" id="Q8IYE0"/>
<dbReference type="PhosphoSitePlus" id="Q8IYE0"/>
<dbReference type="BioMuta" id="CCDC146"/>
<dbReference type="DMDM" id="167006541"/>
<dbReference type="jPOST" id="Q8IYE0"/>
<dbReference type="MassIVE" id="Q8IYE0"/>
<dbReference type="PaxDb" id="9606-ENSP00000285871"/>
<dbReference type="PeptideAtlas" id="Q8IYE0"/>
<dbReference type="ProteomicsDB" id="71162">
    <molecule id="Q8IYE0-1"/>
</dbReference>
<dbReference type="ProteomicsDB" id="71163">
    <molecule id="Q8IYE0-2"/>
</dbReference>
<dbReference type="Antibodypedia" id="15014">
    <property type="antibodies" value="88 antibodies from 18 providers"/>
</dbReference>
<dbReference type="DNASU" id="57639"/>
<dbReference type="Ensembl" id="ENST00000285871.5">
    <molecule id="Q8IYE0-1"/>
    <property type="protein sequence ID" value="ENSP00000285871.4"/>
    <property type="gene ID" value="ENSG00000135205.15"/>
</dbReference>
<dbReference type="GeneID" id="57639"/>
<dbReference type="KEGG" id="hsa:57639"/>
<dbReference type="MANE-Select" id="ENST00000285871.5">
    <property type="protein sequence ID" value="ENSP00000285871.4"/>
    <property type="RefSeq nucleotide sequence ID" value="NM_020879.3"/>
    <property type="RefSeq protein sequence ID" value="NP_065930.2"/>
</dbReference>
<dbReference type="UCSC" id="uc003uga.3">
    <molecule id="Q8IYE0-1"/>
    <property type="organism name" value="human"/>
</dbReference>
<dbReference type="AGR" id="HGNC:29296"/>
<dbReference type="CTD" id="57639"/>
<dbReference type="DisGeNET" id="57639"/>
<dbReference type="GeneCards" id="CCDC146"/>
<dbReference type="HGNC" id="HGNC:29296">
    <property type="gene designation" value="CCDC146"/>
</dbReference>
<dbReference type="HPA" id="ENSG00000135205">
    <property type="expression patterns" value="Tissue enhanced (fallopian)"/>
</dbReference>
<dbReference type="MalaCards" id="CCDC146"/>
<dbReference type="MIM" id="619829">
    <property type="type" value="gene"/>
</dbReference>
<dbReference type="MIM" id="620850">
    <property type="type" value="phenotype"/>
</dbReference>
<dbReference type="neXtProt" id="NX_Q8IYE0"/>
<dbReference type="OpenTargets" id="ENSG00000135205"/>
<dbReference type="PharmGKB" id="PA162381475"/>
<dbReference type="VEuPathDB" id="HostDB:ENSG00000135205"/>
<dbReference type="eggNOG" id="ENOG502QPM4">
    <property type="taxonomic scope" value="Eukaryota"/>
</dbReference>
<dbReference type="GeneTree" id="ENSGT00530000063534"/>
<dbReference type="HOGENOM" id="CLU_012766_1_0_1"/>
<dbReference type="InParanoid" id="Q8IYE0"/>
<dbReference type="OMA" id="PRPNAYV"/>
<dbReference type="OrthoDB" id="10262929at2759"/>
<dbReference type="PAN-GO" id="Q8IYE0">
    <property type="GO annotations" value="1 GO annotation based on evolutionary models"/>
</dbReference>
<dbReference type="PhylomeDB" id="Q8IYE0"/>
<dbReference type="TreeFam" id="TF328680"/>
<dbReference type="PathwayCommons" id="Q8IYE0"/>
<dbReference type="SignaLink" id="Q8IYE0"/>
<dbReference type="BioGRID-ORCS" id="57639">
    <property type="hits" value="9 hits in 1151 CRISPR screens"/>
</dbReference>
<dbReference type="ChiTaRS" id="CCDC146">
    <property type="organism name" value="human"/>
</dbReference>
<dbReference type="GenomeRNAi" id="57639"/>
<dbReference type="Pharos" id="Q8IYE0">
    <property type="development level" value="Tdark"/>
</dbReference>
<dbReference type="PRO" id="PR:Q8IYE0"/>
<dbReference type="Proteomes" id="UP000005640">
    <property type="component" value="Chromosome 7"/>
</dbReference>
<dbReference type="RNAct" id="Q8IYE0">
    <property type="molecule type" value="protein"/>
</dbReference>
<dbReference type="Bgee" id="ENSG00000135205">
    <property type="expression patterns" value="Expressed in right uterine tube and 155 other cell types or tissues"/>
</dbReference>
<dbReference type="ExpressionAtlas" id="Q8IYE0">
    <property type="expression patterns" value="baseline and differential"/>
</dbReference>
<dbReference type="GO" id="GO:0005930">
    <property type="term" value="C:axoneme"/>
    <property type="evidence" value="ECO:0000314"/>
    <property type="project" value="UniProtKB"/>
</dbReference>
<dbReference type="GO" id="GO:0005814">
    <property type="term" value="C:centriole"/>
    <property type="evidence" value="ECO:0000314"/>
    <property type="project" value="UniProtKB"/>
</dbReference>
<dbReference type="GO" id="GO:0005813">
    <property type="term" value="C:centrosome"/>
    <property type="evidence" value="ECO:0000314"/>
    <property type="project" value="UniProtKB"/>
</dbReference>
<dbReference type="GO" id="GO:0036064">
    <property type="term" value="C:ciliary basal body"/>
    <property type="evidence" value="ECO:0000314"/>
    <property type="project" value="UniProtKB"/>
</dbReference>
<dbReference type="GO" id="GO:0005856">
    <property type="term" value="C:cytoskeleton"/>
    <property type="evidence" value="ECO:0000318"/>
    <property type="project" value="GO_Central"/>
</dbReference>
<dbReference type="GO" id="GO:0030496">
    <property type="term" value="C:midbody"/>
    <property type="evidence" value="ECO:0000314"/>
    <property type="project" value="UniProtKB"/>
</dbReference>
<dbReference type="GO" id="GO:0036126">
    <property type="term" value="C:sperm flagellum"/>
    <property type="evidence" value="ECO:0000314"/>
    <property type="project" value="UniProtKB"/>
</dbReference>
<dbReference type="GO" id="GO:0120212">
    <property type="term" value="C:sperm head-tail coupling apparatus"/>
    <property type="evidence" value="ECO:0000250"/>
    <property type="project" value="UniProtKB"/>
</dbReference>
<dbReference type="GO" id="GO:0044877">
    <property type="term" value="F:protein-containing complex binding"/>
    <property type="evidence" value="ECO:0007669"/>
    <property type="project" value="Ensembl"/>
</dbReference>
<dbReference type="GO" id="GO:0000902">
    <property type="term" value="P:cell morphogenesis"/>
    <property type="evidence" value="ECO:0007669"/>
    <property type="project" value="Ensembl"/>
</dbReference>
<dbReference type="GO" id="GO:0008283">
    <property type="term" value="P:cell population proliferation"/>
    <property type="evidence" value="ECO:0007669"/>
    <property type="project" value="Ensembl"/>
</dbReference>
<dbReference type="GO" id="GO:0010467">
    <property type="term" value="P:gene expression"/>
    <property type="evidence" value="ECO:0007669"/>
    <property type="project" value="Ensembl"/>
</dbReference>
<dbReference type="GO" id="GO:1905198">
    <property type="term" value="P:manchette assembly"/>
    <property type="evidence" value="ECO:0000250"/>
    <property type="project" value="UniProtKB"/>
</dbReference>
<dbReference type="GO" id="GO:0006997">
    <property type="term" value="P:nucleus organization"/>
    <property type="evidence" value="ECO:0007669"/>
    <property type="project" value="Ensembl"/>
</dbReference>
<dbReference type="GO" id="GO:0007338">
    <property type="term" value="P:single fertilization"/>
    <property type="evidence" value="ECO:0007669"/>
    <property type="project" value="Ensembl"/>
</dbReference>
<dbReference type="GO" id="GO:0007288">
    <property type="term" value="P:sperm axoneme assembly"/>
    <property type="evidence" value="ECO:0000250"/>
    <property type="project" value="UniProtKB"/>
</dbReference>
<dbReference type="GO" id="GO:0120316">
    <property type="term" value="P:sperm flagellum assembly"/>
    <property type="evidence" value="ECO:0000250"/>
    <property type="project" value="UniProtKB"/>
</dbReference>
<dbReference type="GO" id="GO:0007286">
    <property type="term" value="P:spermatid development"/>
    <property type="evidence" value="ECO:0000315"/>
    <property type="project" value="UniProtKB"/>
</dbReference>
<dbReference type="PANTHER" id="PTHR32083">
    <property type="entry name" value="CILIA AND FLAGELLA-ASSOCIATED PROTEIN 58-RELATED"/>
    <property type="match status" value="1"/>
</dbReference>
<dbReference type="PANTHER" id="PTHR32083:SF34">
    <property type="entry name" value="COILED-COIL DOMAIN-CONTAINING PROTEIN 146"/>
    <property type="match status" value="1"/>
</dbReference>
<sequence length="955" mass="112806">MEDSSTDTEKEEEEEKDEKDQEPIYAIVPTINIQDERFVDLSETPAFIFLHELHAMGKLPGTRMAALKAKYTLLHDAVMSTQESEVQLLQNAKRFTEQIQQQQFHLQQADNFPEAFSTEVSKMREQLLKYQNEYNAVKEREFHNQYRLNSLKEEKIIIVKEFEKITKPGEMEKKMKILRESTEELRKEIMQKKLEIKNLREDLASKQKQLLKEQKELEELLGHQVVLKDEVAHHQTIPVQIGKEIEKITRKKVEMEKKKIVLEQEVKTLNDSLKKVENKVSAIVDEKENVIKEVEGKRALLEIKEREHNQLVKLLELARENEATSLTERGILDLNLRNSLIDKQNYHDELSRKQREKERDFRNLRKMELLLKVSWDALRQTQALHQRLLLEMEAIPKDDSTLSERRRELHKEVEVAKRNLAQQKIISEMESKLVEQQLAEENKLLKEQENMKELVVNLLRMTQIKIDEKEQKSKDFLKAQQKYTNIVKEMKAKDLEIRIHKKKKCEIYRRLREFAKLYDTIRNERNKFVNLLHKAHQKVNEIKERHKMSLNELEILRNSAVSQERKLQNSMLKHANNVTIRESMQNDVRKIVSKLQEMKEKKEAQLNNIDRLANTITMIEEEMVQLRKRYEKAVQHRNESGVQLIEREEEICIFYEKINIQEKMKLNGEIEIHLLEEKIQFLKMKIAEKQRQICVTQKLLPAKRSLDADLAVLQIQFSQCTDRIKDLEKQFVKPDGENRARFLPGKDLTEKEMIQKLDKLELQLAKKEEKLLEKDFIYEQVSRLTDRLCSKTQGCKQDTLLLAKKMNGYQRRIKNATEKMMALVAELSMKQALTIELQKEVREKEDFIFTCNSRIEKGLPLNKEIEKEWLKVLRDEEMHALAIAEKSQEFLEADNRQLPNGVYTTAEQRPNAYIPEADATLPLPKPYGALAPFKPSEPGANMRHIRKPVIKPVEI</sequence>
<protein>
    <recommendedName>
        <fullName>Coiled-coil domain-containing protein 146</fullName>
    </recommendedName>
</protein>
<gene>
    <name type="primary">CCDC146</name>
    <name type="synonym">KIAA1505</name>
</gene>
<name>CC146_HUMAN</name>
<keyword id="KW-0025">Alternative splicing</keyword>
<keyword id="KW-0966">Cell projection</keyword>
<keyword id="KW-0969">Cilium</keyword>
<keyword id="KW-0175">Coiled coil</keyword>
<keyword id="KW-0963">Cytoplasm</keyword>
<keyword id="KW-0206">Cytoskeleton</keyword>
<keyword id="KW-0221">Differentiation</keyword>
<keyword id="KW-0225">Disease variant</keyword>
<keyword id="KW-0282">Flagellum</keyword>
<keyword id="KW-1267">Proteomics identification</keyword>
<keyword id="KW-1185">Reference proteome</keyword>
<keyword id="KW-0744">Spermatogenesis</keyword>
<evidence type="ECO:0000250" key="1">
    <source>
        <dbReference type="UniProtKB" id="E9Q9F7"/>
    </source>
</evidence>
<evidence type="ECO:0000255" key="2"/>
<evidence type="ECO:0000256" key="3">
    <source>
        <dbReference type="SAM" id="MobiDB-lite"/>
    </source>
</evidence>
<evidence type="ECO:0000269" key="4">
    <source>
    </source>
</evidence>
<evidence type="ECO:0000269" key="5">
    <source>
    </source>
</evidence>
<evidence type="ECO:0000269" key="6">
    <source>
    </source>
</evidence>
<evidence type="ECO:0000269" key="7">
    <source>
    </source>
</evidence>
<evidence type="ECO:0000269" key="8">
    <source>
    </source>
</evidence>
<evidence type="ECO:0000303" key="9">
    <source>
    </source>
</evidence>
<evidence type="ECO:0000305" key="10"/>
<evidence type="ECO:0000305" key="11">
    <source>
    </source>
</evidence>
<comment type="function">
    <text evidence="1">Essential for sperm flagellum biogenesis and male fertility.</text>
</comment>
<comment type="subunit">
    <text evidence="1">Interacts with CCDC38 and CCDC42. Interacts with intraflagellar transport proteins IFT20 and IFT88.</text>
</comment>
<comment type="subunit">
    <text evidence="7">(Microbial infection) Interacts with Chlamydia trachomatis incM/YT288. In host cells infected with C.trachomatis incM, CCDC146 is recruited to the periphery of the pathogen-containing vacuole but recruitment is not dependent on incM.</text>
</comment>
<comment type="interaction">
    <interactant intactId="EBI-10749669">
        <id>Q8IYE0</id>
    </interactant>
    <interactant intactId="EBI-11745576">
        <id>Q6PJH3</id>
        <label>AKAP9</label>
    </interactant>
    <organismsDiffer>false</organismsDiffer>
    <experiments>3</experiments>
</comment>
<comment type="interaction">
    <interactant intactId="EBI-10749669">
        <id>Q8IYE0</id>
    </interactant>
    <interactant intactId="EBI-465872">
        <id>Q6QNY1</id>
        <label>BLOC1S2</label>
    </interactant>
    <organismsDiffer>false</organismsDiffer>
    <experiments>3</experiments>
</comment>
<comment type="interaction">
    <interactant intactId="EBI-10749669">
        <id>Q8IYE0</id>
    </interactant>
    <interactant intactId="EBI-11524851">
        <id>Q8NA61-2</id>
        <label>CBY2</label>
    </interactant>
    <organismsDiffer>false</organismsDiffer>
    <experiments>3</experiments>
</comment>
<comment type="interaction">
    <interactant intactId="EBI-10749669">
        <id>Q8IYE0</id>
    </interactant>
    <interactant intactId="EBI-750686">
        <id>Q8NCU1</id>
        <label>CCDC197</label>
    </interactant>
    <organismsDiffer>false</organismsDiffer>
    <experiments>5</experiments>
</comment>
<comment type="interaction">
    <interactant intactId="EBI-10749669">
        <id>Q8IYE0</id>
    </interactant>
    <interactant intactId="EBI-748961">
        <id>O95273</id>
        <label>CCNDBP1</label>
    </interactant>
    <organismsDiffer>false</organismsDiffer>
    <experiments>3</experiments>
</comment>
<comment type="interaction">
    <interactant intactId="EBI-10749669">
        <id>Q8IYE0</id>
    </interactant>
    <interactant intactId="EBI-1181367">
        <id>Q01850</id>
        <label>CDR2</label>
    </interactant>
    <organismsDiffer>false</organismsDiffer>
    <experiments>3</experiments>
</comment>
<comment type="interaction">
    <interactant intactId="EBI-10749669">
        <id>Q8IYE0</id>
    </interactant>
    <interactant intactId="EBI-11063830">
        <id>Q86X02</id>
        <label>CDR2L</label>
    </interactant>
    <organismsDiffer>false</organismsDiffer>
    <experiments>3</experiments>
</comment>
<comment type="interaction">
    <interactant intactId="EBI-10749669">
        <id>Q8IYE0</id>
    </interactant>
    <interactant intactId="EBI-1003700">
        <id>Q9H3R5</id>
        <label>CENPH</label>
    </interactant>
    <organismsDiffer>false</organismsDiffer>
    <experiments>3</experiments>
</comment>
<comment type="interaction">
    <interactant intactId="EBI-10749669">
        <id>Q8IYE0</id>
    </interactant>
    <interactant intactId="EBI-744115">
        <id>Q9C0F1</id>
        <label>CEP44</label>
    </interactant>
    <organismsDiffer>false</organismsDiffer>
    <experiments>3</experiments>
</comment>
<comment type="interaction">
    <interactant intactId="EBI-10749669">
        <id>Q8IYE0</id>
    </interactant>
    <interactant intactId="EBI-5661036">
        <id>A1L4K1</id>
        <label>FSD2</label>
    </interactant>
    <organismsDiffer>false</organismsDiffer>
    <experiments>3</experiments>
</comment>
<comment type="interaction">
    <interactant intactId="EBI-10749669">
        <id>Q8IYE0</id>
    </interactant>
    <interactant intactId="EBI-1052570">
        <id>O95995</id>
        <label>GAS8</label>
    </interactant>
    <organismsDiffer>false</organismsDiffer>
    <experiments>3</experiments>
</comment>
<comment type="interaction">
    <interactant intactId="EBI-10749669">
        <id>Q8IYE0</id>
    </interactant>
    <interactant intactId="EBI-371669">
        <id>O75496</id>
        <label>GMNN</label>
    </interactant>
    <organismsDiffer>false</organismsDiffer>
    <experiments>5</experiments>
</comment>
<comment type="interaction">
    <interactant intactId="EBI-10749669">
        <id>Q8IYE0</id>
    </interactant>
    <interactant intactId="EBI-5916454">
        <id>A6NEM1</id>
        <label>GOLGA6L9</label>
    </interactant>
    <organismsDiffer>false</organismsDiffer>
    <experiments>3</experiments>
</comment>
<comment type="interaction">
    <interactant intactId="EBI-10749669">
        <id>Q8IYE0</id>
    </interactant>
    <interactant intactId="EBI-473189">
        <id>Q96D09</id>
        <label>GPRASP2</label>
    </interactant>
    <organismsDiffer>false</organismsDiffer>
    <experiments>3</experiments>
</comment>
<comment type="interaction">
    <interactant intactId="EBI-10749669">
        <id>Q8IYE0</id>
    </interactant>
    <interactant intactId="EBI-10962409">
        <id>Q6IC98</id>
        <label>GRAMD4</label>
    </interactant>
    <organismsDiffer>false</organismsDiffer>
    <experiments>3</experiments>
</comment>
<comment type="interaction">
    <interactant intactId="EBI-10749669">
        <id>Q8IYE0</id>
    </interactant>
    <interactant intactId="EBI-7116203">
        <id>O75031</id>
        <label>HSF2BP</label>
    </interactant>
    <organismsDiffer>false</organismsDiffer>
    <experiments>3</experiments>
</comment>
<comment type="interaction">
    <interactant intactId="EBI-10749669">
        <id>Q8IYE0</id>
    </interactant>
    <interactant intactId="EBI-4311436">
        <id>Q2T9L4</id>
        <label>INSYN1</label>
    </interactant>
    <organismsDiffer>false</organismsDiffer>
    <experiments>3</experiments>
</comment>
<comment type="interaction">
    <interactant intactId="EBI-10749669">
        <id>Q8IYE0</id>
    </interactant>
    <interactant intactId="EBI-14069005">
        <id>Q9BVG8-5</id>
        <label>KIFC3</label>
    </interactant>
    <organismsDiffer>false</organismsDiffer>
    <experiments>3</experiments>
</comment>
<comment type="interaction">
    <interactant intactId="EBI-10749669">
        <id>Q8IYE0</id>
    </interactant>
    <interactant intactId="EBI-356410">
        <id>P08779</id>
        <label>KRT16</label>
    </interactant>
    <organismsDiffer>false</organismsDiffer>
    <experiments>3</experiments>
</comment>
<comment type="interaction">
    <interactant intactId="EBI-10749669">
        <id>Q8IYE0</id>
    </interactant>
    <interactant intactId="EBI-2952736">
        <id>Q2M2I5</id>
        <label>KRT24</label>
    </interactant>
    <organismsDiffer>false</organismsDiffer>
    <experiments>3</experiments>
</comment>
<comment type="interaction">
    <interactant intactId="EBI-10749669">
        <id>Q8IYE0</id>
    </interactant>
    <interactant intactId="EBI-12084444">
        <id>Q7Z3Y9</id>
        <label>KRT26</label>
    </interactant>
    <organismsDiffer>false</organismsDiffer>
    <experiments>3</experiments>
</comment>
<comment type="interaction">
    <interactant intactId="EBI-10749669">
        <id>Q8IYE0</id>
    </interactant>
    <interactant intactId="EBI-3044087">
        <id>Q7Z3Y8</id>
        <label>KRT27</label>
    </interactant>
    <organismsDiffer>false</organismsDiffer>
    <experiments>3</experiments>
</comment>
<comment type="interaction">
    <interactant intactId="EBI-10749669">
        <id>Q8IYE0</id>
    </interactant>
    <interactant intactId="EBI-948001">
        <id>Q15323</id>
        <label>KRT31</label>
    </interactant>
    <organismsDiffer>false</organismsDiffer>
    <experiments>3</experiments>
</comment>
<comment type="interaction">
    <interactant intactId="EBI-10749669">
        <id>Q8IYE0</id>
    </interactant>
    <interactant intactId="EBI-1047093">
        <id>O76011</id>
        <label>KRT34</label>
    </interactant>
    <organismsDiffer>false</organismsDiffer>
    <experiments>3</experiments>
</comment>
<comment type="interaction">
    <interactant intactId="EBI-10749669">
        <id>Q8IYE0</id>
    </interactant>
    <interactant intactId="EBI-1047263">
        <id>O76015</id>
        <label>KRT38</label>
    </interactant>
    <organismsDiffer>false</organismsDiffer>
    <experiments>5</experiments>
</comment>
<comment type="interaction">
    <interactant intactId="EBI-10749669">
        <id>Q8IYE0</id>
    </interactant>
    <interactant intactId="EBI-9996498">
        <id>O43790</id>
        <label>KRT86</label>
    </interactant>
    <organismsDiffer>false</organismsDiffer>
    <experiments>3</experiments>
</comment>
<comment type="interaction">
    <interactant intactId="EBI-10749669">
        <id>Q8IYE0</id>
    </interactant>
    <interactant intactId="EBI-12039345">
        <id>Q9UBR4-2</id>
        <label>LHX3</label>
    </interactant>
    <organismsDiffer>false</organismsDiffer>
    <experiments>3</experiments>
</comment>
<comment type="interaction">
    <interactant intactId="EBI-10749669">
        <id>Q8IYE0</id>
    </interactant>
    <interactant intactId="EBI-739552">
        <id>P43364</id>
        <label>MAGEA11</label>
    </interactant>
    <organismsDiffer>false</organismsDiffer>
    <experiments>3</experiments>
</comment>
<comment type="interaction">
    <interactant intactId="EBI-10749669">
        <id>Q8IYE0</id>
    </interactant>
    <interactant intactId="EBI-1045155">
        <id>P43360</id>
        <label>MAGEA6</label>
    </interactant>
    <organismsDiffer>false</organismsDiffer>
    <experiments>3</experiments>
</comment>
<comment type="interaction">
    <interactant intactId="EBI-10749669">
        <id>Q8IYE0</id>
    </interactant>
    <interactant intactId="EBI-307531">
        <id>P23508</id>
        <label>MCC</label>
    </interactant>
    <organismsDiffer>false</organismsDiffer>
    <experiments>3</experiments>
</comment>
<comment type="interaction">
    <interactant intactId="EBI-10749669">
        <id>Q8IYE0</id>
    </interactant>
    <interactant intactId="EBI-2548751">
        <id>Q8TD10</id>
        <label>MIPOL1</label>
    </interactant>
    <organismsDiffer>false</organismsDiffer>
    <experiments>3</experiments>
</comment>
<comment type="interaction">
    <interactant intactId="EBI-10749669">
        <id>Q8IYE0</id>
    </interactant>
    <interactant intactId="EBI-995714">
        <id>Q9Y605</id>
        <label>MRFAP1</label>
    </interactant>
    <organismsDiffer>false</organismsDiffer>
    <experiments>3</experiments>
</comment>
<comment type="interaction">
    <interactant intactId="EBI-10749669">
        <id>Q8IYE0</id>
    </interactant>
    <interactant intactId="EBI-11522433">
        <id>Q5JR59-3</id>
        <label>MTUS2</label>
    </interactant>
    <organismsDiffer>false</organismsDiffer>
    <experiments>3</experiments>
</comment>
<comment type="interaction">
    <interactant intactId="EBI-10749669">
        <id>Q8IYE0</id>
    </interactant>
    <interactant intactId="EBI-2512055">
        <id>O15049</id>
        <label>N4BP3</label>
    </interactant>
    <organismsDiffer>false</organismsDiffer>
    <experiments>5</experiments>
</comment>
<comment type="interaction">
    <interactant intactId="EBI-10749669">
        <id>Q8IYE0</id>
    </interactant>
    <interactant intactId="EBI-3911716">
        <id>Q9ULW6</id>
        <label>NAP1L2</label>
    </interactant>
    <organismsDiffer>false</organismsDiffer>
    <experiments>3</experiments>
</comment>
<comment type="interaction">
    <interactant intactId="EBI-10749669">
        <id>Q8IYE0</id>
    </interactant>
    <interactant intactId="EBI-10172876">
        <id>Q7Z6G3-2</id>
        <label>NECAB2</label>
    </interactant>
    <organismsDiffer>false</organismsDiffer>
    <experiments>3</experiments>
</comment>
<comment type="interaction">
    <interactant intactId="EBI-10749669">
        <id>Q8IYE0</id>
    </interactant>
    <interactant intactId="EBI-347978">
        <id>P37198</id>
        <label>NUP62</label>
    </interactant>
    <organismsDiffer>false</organismsDiffer>
    <experiments>5</experiments>
</comment>
<comment type="interaction">
    <interactant intactId="EBI-10749669">
        <id>Q8IYE0</id>
    </interactant>
    <interactant intactId="EBI-9640281">
        <id>Q5VU43-2</id>
        <label>PDE4DIP</label>
    </interactant>
    <organismsDiffer>false</organismsDiffer>
    <experiments>3</experiments>
</comment>
<comment type="interaction">
    <interactant intactId="EBI-10749669">
        <id>Q8IYE0</id>
    </interactant>
    <interactant intactId="EBI-742388">
        <id>Q9H8W4</id>
        <label>PLEKHF2</label>
    </interactant>
    <organismsDiffer>false</organismsDiffer>
    <experiments>3</experiments>
</comment>
<comment type="interaction">
    <interactant intactId="EBI-10749669">
        <id>Q8IYE0</id>
    </interactant>
    <interactant intactId="EBI-2561661">
        <id>Q969Q6</id>
        <label>PPP2R3C</label>
    </interactant>
    <organismsDiffer>false</organismsDiffer>
    <experiments>3</experiments>
</comment>
<comment type="interaction">
    <interactant intactId="EBI-10749669">
        <id>Q8IYE0</id>
    </interactant>
    <interactant intactId="EBI-11336487">
        <id>Q2NL68</id>
        <label>PROSER3</label>
    </interactant>
    <organismsDiffer>false</organismsDiffer>
    <experiments>3</experiments>
</comment>
<comment type="interaction">
    <interactant intactId="EBI-10749669">
        <id>Q8IYE0</id>
    </interactant>
    <interactant intactId="EBI-346869">
        <id>Q9Y3L3</id>
        <label>SH3BP1</label>
    </interactant>
    <organismsDiffer>false</organismsDiffer>
    <experiments>3</experiments>
</comment>
<comment type="interaction">
    <interactant intactId="EBI-10749669">
        <id>Q8IYE0</id>
    </interactant>
    <interactant intactId="EBI-11139477">
        <id>Q96N21</id>
        <label>TEPSIN</label>
    </interactant>
    <organismsDiffer>false</organismsDiffer>
    <experiments>3</experiments>
</comment>
<comment type="interaction">
    <interactant intactId="EBI-10749669">
        <id>Q8IYE0</id>
    </interactant>
    <interactant intactId="EBI-1105213">
        <id>Q9UBB9</id>
        <label>TFIP11</label>
    </interactant>
    <organismsDiffer>false</organismsDiffer>
    <experiments>3</experiments>
</comment>
<comment type="interaction">
    <interactant intactId="EBI-10749669">
        <id>Q8IYE0</id>
    </interactant>
    <interactant intactId="EBI-716286">
        <id>Q6I9Y2</id>
        <label>THOC7</label>
    </interactant>
    <organismsDiffer>false</organismsDiffer>
    <experiments>3</experiments>
</comment>
<comment type="interaction">
    <interactant intactId="EBI-10749669">
        <id>Q8IYE0</id>
    </interactant>
    <interactant intactId="EBI-2130429">
        <id>Q9BYV2</id>
        <label>TRIM54</label>
    </interactant>
    <organismsDiffer>false</organismsDiffer>
    <experiments>3</experiments>
</comment>
<comment type="interaction">
    <interactant intactId="EBI-10749669">
        <id>Q8IYE0</id>
    </interactant>
    <interactant intactId="EBI-11059915">
        <id>Q8N7C3</id>
        <label>TRIML2</label>
    </interactant>
    <organismsDiffer>false</organismsDiffer>
    <experiments>3</experiments>
</comment>
<comment type="interaction">
    <interactant intactId="EBI-10749669">
        <id>Q8IYE0</id>
    </interactant>
    <interactant intactId="EBI-359793">
        <id>P40222</id>
        <label>TXLNA</label>
    </interactant>
    <organismsDiffer>false</organismsDiffer>
    <experiments>3</experiments>
</comment>
<comment type="interaction">
    <interactant intactId="EBI-10749669">
        <id>Q8IYE0</id>
    </interactant>
    <interactant intactId="EBI-739895">
        <id>Q8N6Y0</id>
        <label>USHBP1</label>
    </interactant>
    <organismsDiffer>false</organismsDiffer>
    <experiments>3</experiments>
</comment>
<comment type="interaction">
    <interactant intactId="EBI-10749669">
        <id>Q8IYE0</id>
    </interactant>
    <interactant intactId="EBI-12146727">
        <id>Q9UK41-2</id>
        <label>VPS28</label>
    </interactant>
    <organismsDiffer>false</organismsDiffer>
    <experiments>3</experiments>
</comment>
<comment type="interaction">
    <interactant intactId="EBI-10749669">
        <id>Q8IYE0</id>
    </interactant>
    <interactant intactId="EBI-2799833">
        <id>Q8N1B4</id>
        <label>VPS52</label>
    </interactant>
    <organismsDiffer>false</organismsDiffer>
    <experiments>3</experiments>
</comment>
<comment type="interaction">
    <interactant intactId="EBI-10247802">
        <id>Q8IYE0-2</id>
    </interactant>
    <interactant intactId="EBI-741724">
        <id>Q8NA61</id>
        <label>CBY2</label>
    </interactant>
    <organismsDiffer>false</organismsDiffer>
    <experiments>3</experiments>
</comment>
<comment type="interaction">
    <interactant intactId="EBI-10247802">
        <id>Q8IYE0-2</id>
    </interactant>
    <interactant intactId="EBI-10171416">
        <id>Q96JN2-2</id>
        <label>CCDC136</label>
    </interactant>
    <organismsDiffer>false</organismsDiffer>
    <experiments>3</experiments>
</comment>
<comment type="interaction">
    <interactant intactId="EBI-10247802">
        <id>Q8IYE0-2</id>
    </interactant>
    <interactant intactId="EBI-748961">
        <id>O95273</id>
        <label>CCNDBP1</label>
    </interactant>
    <organismsDiffer>false</organismsDiffer>
    <experiments>3</experiments>
</comment>
<comment type="interaction">
    <interactant intactId="EBI-10247802">
        <id>Q8IYE0-2</id>
    </interactant>
    <interactant intactId="EBI-743488">
        <id>Q96L14</id>
        <label>CEP170P1</label>
    </interactant>
    <organismsDiffer>false</organismsDiffer>
    <experiments>3</experiments>
</comment>
<comment type="interaction">
    <interactant intactId="EBI-10247802">
        <id>Q8IYE0-2</id>
    </interactant>
    <interactant intactId="EBI-744115">
        <id>Q9C0F1</id>
        <label>CEP44</label>
    </interactant>
    <organismsDiffer>false</organismsDiffer>
    <experiments>3</experiments>
</comment>
<comment type="interaction">
    <interactant intactId="EBI-10247802">
        <id>Q8IYE0-2</id>
    </interactant>
    <interactant intactId="EBI-465804">
        <id>Q96EV8</id>
        <label>DTNBP1</label>
    </interactant>
    <organismsDiffer>false</organismsDiffer>
    <experiments>3</experiments>
</comment>
<comment type="interaction">
    <interactant intactId="EBI-10247802">
        <id>Q8IYE0-2</id>
    </interactant>
    <interactant intactId="EBI-371669">
        <id>O75496</id>
        <label>GMNN</label>
    </interactant>
    <organismsDiffer>false</organismsDiffer>
    <experiments>4</experiments>
</comment>
<comment type="interaction">
    <interactant intactId="EBI-10247802">
        <id>Q8IYE0-2</id>
    </interactant>
    <interactant intactId="EBI-618309">
        <id>Q08379</id>
        <label>GOLGA2</label>
    </interactant>
    <organismsDiffer>false</organismsDiffer>
    <experiments>3</experiments>
</comment>
<comment type="interaction">
    <interactant intactId="EBI-10247802">
        <id>Q8IYE0-2</id>
    </interactant>
    <interactant intactId="EBI-297888">
        <id>P05783</id>
        <label>KRT18</label>
    </interactant>
    <organismsDiffer>false</organismsDiffer>
    <experiments>3</experiments>
</comment>
<comment type="interaction">
    <interactant intactId="EBI-10247802">
        <id>Q8IYE0-2</id>
    </interactant>
    <interactant intactId="EBI-742756">
        <id>P08727</id>
        <label>KRT19</label>
    </interactant>
    <organismsDiffer>false</organismsDiffer>
    <experiments>3</experiments>
</comment>
<comment type="interaction">
    <interactant intactId="EBI-10247802">
        <id>Q8IYE0-2</id>
    </interactant>
    <interactant intactId="EBI-1047263">
        <id>O76015</id>
        <label>KRT38</label>
    </interactant>
    <organismsDiffer>false</organismsDiffer>
    <experiments>4</experiments>
</comment>
<comment type="interaction">
    <interactant intactId="EBI-10247802">
        <id>Q8IYE0-2</id>
    </interactant>
    <interactant intactId="EBI-10171697">
        <id>Q6A162</id>
        <label>KRT40</label>
    </interactant>
    <organismsDiffer>false</organismsDiffer>
    <experiments>3</experiments>
</comment>
<comment type="interaction">
    <interactant intactId="EBI-10247802">
        <id>Q8IYE0-2</id>
    </interactant>
    <interactant intactId="EBI-10178634">
        <id>P43364-2</id>
        <label>MAGEA11</label>
    </interactant>
    <organismsDiffer>false</organismsDiffer>
    <experiments>3</experiments>
</comment>
<comment type="interaction">
    <interactant intactId="EBI-10247802">
        <id>Q8IYE0-2</id>
    </interactant>
    <interactant intactId="EBI-1045155">
        <id>P43360</id>
        <label>MAGEA6</label>
    </interactant>
    <organismsDiffer>false</organismsDiffer>
    <experiments>3</experiments>
</comment>
<comment type="interaction">
    <interactant intactId="EBI-10247802">
        <id>Q8IYE0-2</id>
    </interactant>
    <interactant intactId="EBI-394607">
        <id>Q9NPJ6</id>
        <label>MED4</label>
    </interactant>
    <organismsDiffer>false</organismsDiffer>
    <experiments>3</experiments>
</comment>
<comment type="interaction">
    <interactant intactId="EBI-10247802">
        <id>Q8IYE0-2</id>
    </interactant>
    <interactant intactId="EBI-742948">
        <id>Q5JR59</id>
        <label>MTUS2</label>
    </interactant>
    <organismsDiffer>false</organismsDiffer>
    <experiments>3</experiments>
</comment>
<comment type="interaction">
    <interactant intactId="EBI-10247802">
        <id>Q8IYE0-2</id>
    </interactant>
    <interactant intactId="EBI-10172876">
        <id>Q7Z6G3-2</id>
        <label>NECAB2</label>
    </interactant>
    <organismsDiffer>false</organismsDiffer>
    <experiments>3</experiments>
</comment>
<comment type="interaction">
    <interactant intactId="EBI-10247802">
        <id>Q8IYE0-2</id>
    </interactant>
    <interactant intactId="EBI-719716">
        <id>Q9Y2I6</id>
        <label>NINL</label>
    </interactant>
    <organismsDiffer>false</organismsDiffer>
    <experiments>3</experiments>
</comment>
<comment type="interaction">
    <interactant intactId="EBI-10247802">
        <id>Q8IYE0-2</id>
    </interactant>
    <interactant intactId="EBI-347978">
        <id>P37198</id>
        <label>NUP62</label>
    </interactant>
    <organismsDiffer>false</organismsDiffer>
    <experiments>3</experiments>
</comment>
<comment type="interaction">
    <interactant intactId="EBI-10247802">
        <id>Q8IYE0-2</id>
    </interactant>
    <interactant intactId="EBI-302345">
        <id>Q8ND90</id>
        <label>PNMA1</label>
    </interactant>
    <organismsDiffer>false</organismsDiffer>
    <experiments>3</experiments>
</comment>
<comment type="interaction">
    <interactant intactId="EBI-10247802">
        <id>Q8IYE0-2</id>
    </interactant>
    <interactant intactId="EBI-357669">
        <id>P62333</id>
        <label>PSMC6</label>
    </interactant>
    <organismsDiffer>false</organismsDiffer>
    <experiments>3</experiments>
</comment>
<comment type="interaction">
    <interactant intactId="EBI-10247802">
        <id>Q8IYE0-2</id>
    </interactant>
    <interactant intactId="EBI-726876">
        <id>Q6NUQ1</id>
        <label>RINT1</label>
    </interactant>
    <organismsDiffer>false</organismsDiffer>
    <experiments>3</experiments>
</comment>
<comment type="interaction">
    <interactant intactId="EBI-10247802">
        <id>Q8IYE0-2</id>
    </interactant>
    <interactant intactId="EBI-744408">
        <id>O75150</id>
        <label>RNF40</label>
    </interactant>
    <organismsDiffer>false</organismsDiffer>
    <experiments>3</experiments>
</comment>
<comment type="interaction">
    <interactant intactId="EBI-10247802">
        <id>Q8IYE0-2</id>
    </interactant>
    <interactant intactId="EBI-1050213">
        <id>Q96KN7</id>
        <label>RPGRIP1</label>
    </interactant>
    <organismsDiffer>false</organismsDiffer>
    <experiments>3</experiments>
</comment>
<comment type="interaction">
    <interactant intactId="EBI-10247802">
        <id>Q8IYE0-2</id>
    </interactant>
    <interactant intactId="EBI-1105213">
        <id>Q9UBB9</id>
        <label>TFIP11</label>
    </interactant>
    <organismsDiffer>false</organismsDiffer>
    <experiments>3</experiments>
</comment>
<comment type="interaction">
    <interactant intactId="EBI-10247802">
        <id>Q8IYE0-2</id>
    </interactant>
    <interactant intactId="EBI-10182881">
        <id>A1L306</id>
        <label>TNR</label>
    </interactant>
    <organismsDiffer>false</organismsDiffer>
    <experiments>3</experiments>
</comment>
<comment type="interaction">
    <interactant intactId="EBI-10247802">
        <id>Q8IYE0-2</id>
    </interactant>
    <interactant intactId="EBI-10184033">
        <id>Q5VU62</id>
        <label>TPM3</label>
    </interactant>
    <organismsDiffer>false</organismsDiffer>
    <experiments>3</experiments>
</comment>
<comment type="interaction">
    <interactant intactId="EBI-10247802">
        <id>Q8IYE0-2</id>
    </interactant>
    <interactant intactId="EBI-359224">
        <id>Q13077</id>
        <label>TRAF1</label>
    </interactant>
    <organismsDiffer>false</organismsDiffer>
    <experiments>3</experiments>
</comment>
<comment type="interaction">
    <interactant intactId="EBI-10247802">
        <id>Q8IYE0-2</id>
    </interactant>
    <interactant intactId="EBI-740098">
        <id>P36406</id>
        <label>TRIM23</label>
    </interactant>
    <organismsDiffer>false</organismsDiffer>
    <experiments>3</experiments>
</comment>
<comment type="interaction">
    <interactant intactId="EBI-10247802">
        <id>Q8IYE0-2</id>
    </interactant>
    <interactant intactId="EBI-2130429">
        <id>Q9BYV2</id>
        <label>TRIM54</label>
    </interactant>
    <organismsDiffer>false</organismsDiffer>
    <experiments>3</experiments>
</comment>
<comment type="interaction">
    <interactant intactId="EBI-10247802">
        <id>Q8IYE0-2</id>
    </interactant>
    <interactant intactId="EBI-739485">
        <id>Q9Y3Q8</id>
        <label>TSC22D4</label>
    </interactant>
    <organismsDiffer>false</organismsDiffer>
    <experiments>3</experiments>
</comment>
<comment type="interaction">
    <interactant intactId="EBI-10247802">
        <id>Q8IYE0-2</id>
    </interactant>
    <interactant intactId="EBI-739895">
        <id>Q8N6Y0</id>
        <label>USHBP1</label>
    </interactant>
    <organismsDiffer>false</organismsDiffer>
    <experiments>3</experiments>
</comment>
<comment type="interaction">
    <interactant intactId="EBI-10247802">
        <id>Q8IYE0-2</id>
    </interactant>
    <interactant intactId="EBI-2799833">
        <id>Q8N1B4</id>
        <label>VPS52</label>
    </interactant>
    <organismsDiffer>false</organismsDiffer>
    <experiments>3</experiments>
</comment>
<comment type="subcellular location">
    <subcellularLocation>
        <location evidence="6 7 8">Cytoplasm</location>
        <location evidence="6 7 8">Cytoskeleton</location>
        <location evidence="6 7 8">Microtubule organizing center</location>
        <location evidence="6 7 8">Centrosome</location>
        <location evidence="6 7 8">Centriole</location>
    </subcellularLocation>
    <subcellularLocation>
        <location evidence="8">Cytoplasm</location>
        <location evidence="8">Cytoskeleton</location>
        <location evidence="8">Flagellum axoneme</location>
    </subcellularLocation>
    <subcellularLocation>
        <location evidence="8">Cytoplasm</location>
        <location evidence="8">Cytoskeleton</location>
        <location evidence="8">Cilium basal body</location>
    </subcellularLocation>
    <subcellularLocation>
        <location evidence="8">Midbody</location>
    </subcellularLocation>
    <text evidence="1 6 8">In sperm cells, was seen localized to only one centriole identified as the mother centriole by co-staining with CEP164 (PubMed:25074808). In other experiments, localization to centrioles in sperm cells was not observed (PubMed:38441556). Localizes to the sperm connecting piece and flagellum during spermiogenesis and to the flagellum in spermatozoa from cauda of the epididymis (By similarity). In sperm cell flagellum, may be associated with tubulin doublets (PubMed:38441556).</text>
</comment>
<comment type="subcellular location">
    <text evidence="7">(Microbial infection) In cells infected with C.trachomatis incM, recruited to the periphery of the pathogen-containing vacuole but recruitment is not dependent on incM.</text>
</comment>
<comment type="alternative products">
    <event type="alternative splicing"/>
    <isoform>
        <id>Q8IYE0-1</id>
        <name>1</name>
        <sequence type="displayed"/>
    </isoform>
    <isoform>
        <id>Q8IYE0-2</id>
        <name>2</name>
        <sequence type="described" ref="VSP_030926 VSP_030927"/>
    </isoform>
</comment>
<comment type="tissue specificity">
    <text evidence="8">Widely expressed.</text>
</comment>
<comment type="disease" evidence="8">
    <disease id="DI-06911">
        <name>Spermatogenic failure 94</name>
        <acronym>SPGF94</acronym>
        <description>An autosomal recessive, male infertility disorder characterized by reduced progressive sperm motility and multiple morphologic abnormalities of the flagella, including irregularly shaped, short, absent, coiled, and multiple tails.</description>
        <dbReference type="MIM" id="620850"/>
    </disease>
    <text>The disease is caused by variants affecting the gene represented in this entry.</text>
</comment>
<comment type="caution">
    <text evidence="11">A report observed N-glycosylation at Asn-815 (PubMed:19139490). However, as the protein is not predicted to localize in an extracellular compartment of the cell, additional evidence is required to confirm this result.</text>
</comment>
<comment type="sequence caution" evidence="10">
    <conflict type="erroneous initiation">
        <sequence resource="EMBL-CDS" id="BAA96029"/>
    </conflict>
    <text>Extended N-terminus.</text>
</comment>
<proteinExistence type="evidence at protein level"/>